<reference key="1">
    <citation type="journal article" date="2005" name="Nat. Biotechnol.">
        <title>The genome sequence of the ethanologenic bacterium Zymomonas mobilis ZM4.</title>
        <authorList>
            <person name="Seo J.-S."/>
            <person name="Chong H."/>
            <person name="Park H.S."/>
            <person name="Yoon K.-O."/>
            <person name="Jung C."/>
            <person name="Kim J.J."/>
            <person name="Hong J.H."/>
            <person name="Kim H."/>
            <person name="Kim J.-H."/>
            <person name="Kil J.-I."/>
            <person name="Park C.J."/>
            <person name="Oh H.-M."/>
            <person name="Lee J.-S."/>
            <person name="Jin S.-J."/>
            <person name="Um H.-W."/>
            <person name="Lee H.-J."/>
            <person name="Oh S.-J."/>
            <person name="Kim J.Y."/>
            <person name="Kang H.L."/>
            <person name="Lee S.Y."/>
            <person name="Lee K.J."/>
            <person name="Kang H.S."/>
        </authorList>
    </citation>
    <scope>NUCLEOTIDE SEQUENCE [LARGE SCALE GENOMIC DNA]</scope>
    <source>
        <strain>ATCC 31821 / ZM4 / CP4</strain>
    </source>
</reference>
<dbReference type="EC" id="2.7.7.6" evidence="1"/>
<dbReference type="EMBL" id="AE008692">
    <property type="protein sequence ID" value="AAV90344.1"/>
    <property type="molecule type" value="Genomic_DNA"/>
</dbReference>
<dbReference type="RefSeq" id="WP_011241466.1">
    <property type="nucleotide sequence ID" value="NZ_CP035711.1"/>
</dbReference>
<dbReference type="SMR" id="Q5NLR6"/>
<dbReference type="STRING" id="264203.ZMO1720"/>
<dbReference type="GeneID" id="79904953"/>
<dbReference type="KEGG" id="zmo:ZMO1720"/>
<dbReference type="eggNOG" id="COG1758">
    <property type="taxonomic scope" value="Bacteria"/>
</dbReference>
<dbReference type="HOGENOM" id="CLU_125406_2_0_5"/>
<dbReference type="Proteomes" id="UP000001173">
    <property type="component" value="Chromosome"/>
</dbReference>
<dbReference type="GO" id="GO:0000428">
    <property type="term" value="C:DNA-directed RNA polymerase complex"/>
    <property type="evidence" value="ECO:0007669"/>
    <property type="project" value="UniProtKB-KW"/>
</dbReference>
<dbReference type="GO" id="GO:0003677">
    <property type="term" value="F:DNA binding"/>
    <property type="evidence" value="ECO:0007669"/>
    <property type="project" value="UniProtKB-UniRule"/>
</dbReference>
<dbReference type="GO" id="GO:0003899">
    <property type="term" value="F:DNA-directed RNA polymerase activity"/>
    <property type="evidence" value="ECO:0007669"/>
    <property type="project" value="UniProtKB-UniRule"/>
</dbReference>
<dbReference type="GO" id="GO:0006351">
    <property type="term" value="P:DNA-templated transcription"/>
    <property type="evidence" value="ECO:0007669"/>
    <property type="project" value="UniProtKB-UniRule"/>
</dbReference>
<dbReference type="Gene3D" id="3.90.940.10">
    <property type="match status" value="1"/>
</dbReference>
<dbReference type="HAMAP" id="MF_00366">
    <property type="entry name" value="RNApol_bact_RpoZ"/>
    <property type="match status" value="1"/>
</dbReference>
<dbReference type="InterPro" id="IPR003716">
    <property type="entry name" value="DNA-dir_RNA_pol_omega"/>
</dbReference>
<dbReference type="InterPro" id="IPR006110">
    <property type="entry name" value="Pol_omega/Rpo6/RPB6"/>
</dbReference>
<dbReference type="InterPro" id="IPR036161">
    <property type="entry name" value="RPB6/omega-like_sf"/>
</dbReference>
<dbReference type="NCBIfam" id="TIGR00690">
    <property type="entry name" value="rpoZ"/>
    <property type="match status" value="1"/>
</dbReference>
<dbReference type="PANTHER" id="PTHR34476">
    <property type="entry name" value="DNA-DIRECTED RNA POLYMERASE SUBUNIT OMEGA"/>
    <property type="match status" value="1"/>
</dbReference>
<dbReference type="PANTHER" id="PTHR34476:SF1">
    <property type="entry name" value="DNA-DIRECTED RNA POLYMERASE SUBUNIT OMEGA"/>
    <property type="match status" value="1"/>
</dbReference>
<dbReference type="Pfam" id="PF01192">
    <property type="entry name" value="RNA_pol_Rpb6"/>
    <property type="match status" value="1"/>
</dbReference>
<dbReference type="SMART" id="SM01409">
    <property type="entry name" value="RNA_pol_Rpb6"/>
    <property type="match status" value="1"/>
</dbReference>
<dbReference type="SUPFAM" id="SSF63562">
    <property type="entry name" value="RPB6/omega subunit-like"/>
    <property type="match status" value="1"/>
</dbReference>
<gene>
    <name evidence="1" type="primary">rpoZ</name>
    <name type="ordered locus">ZMO1720</name>
</gene>
<organism>
    <name type="scientific">Zymomonas mobilis subsp. mobilis (strain ATCC 31821 / ZM4 / CP4)</name>
    <dbReference type="NCBI Taxonomy" id="264203"/>
    <lineage>
        <taxon>Bacteria</taxon>
        <taxon>Pseudomonadati</taxon>
        <taxon>Pseudomonadota</taxon>
        <taxon>Alphaproteobacteria</taxon>
        <taxon>Sphingomonadales</taxon>
        <taxon>Zymomonadaceae</taxon>
        <taxon>Zymomonas</taxon>
    </lineage>
</organism>
<name>RPOZ_ZYMMO</name>
<keyword id="KW-0240">DNA-directed RNA polymerase</keyword>
<keyword id="KW-0548">Nucleotidyltransferase</keyword>
<keyword id="KW-1185">Reference proteome</keyword>
<keyword id="KW-0804">Transcription</keyword>
<keyword id="KW-0808">Transferase</keyword>
<protein>
    <recommendedName>
        <fullName evidence="1">DNA-directed RNA polymerase subunit omega</fullName>
        <shortName evidence="1">RNAP omega subunit</shortName>
        <ecNumber evidence="1">2.7.7.6</ecNumber>
    </recommendedName>
    <alternativeName>
        <fullName evidence="1">RNA polymerase omega subunit</fullName>
    </alternativeName>
    <alternativeName>
        <fullName evidence="1">Transcriptase subunit omega</fullName>
    </alternativeName>
</protein>
<accession>Q5NLR6</accession>
<comment type="function">
    <text evidence="1">Promotes RNA polymerase assembly. Latches the N- and C-terminal regions of the beta' subunit thereby facilitating its interaction with the beta and alpha subunits.</text>
</comment>
<comment type="catalytic activity">
    <reaction evidence="1">
        <text>RNA(n) + a ribonucleoside 5'-triphosphate = RNA(n+1) + diphosphate</text>
        <dbReference type="Rhea" id="RHEA:21248"/>
        <dbReference type="Rhea" id="RHEA-COMP:14527"/>
        <dbReference type="Rhea" id="RHEA-COMP:17342"/>
        <dbReference type="ChEBI" id="CHEBI:33019"/>
        <dbReference type="ChEBI" id="CHEBI:61557"/>
        <dbReference type="ChEBI" id="CHEBI:140395"/>
        <dbReference type="EC" id="2.7.7.6"/>
    </reaction>
</comment>
<comment type="subunit">
    <text evidence="1">The RNAP catalytic core consists of 2 alpha, 1 beta, 1 beta' and 1 omega subunit. When a sigma factor is associated with the core the holoenzyme is formed, which can initiate transcription.</text>
</comment>
<comment type="similarity">
    <text evidence="1">Belongs to the RNA polymerase subunit omega family.</text>
</comment>
<sequence>MARVTVEDCIDKVHNRFDLILLAAQRARQISGGAELTLDRDRDKNPVVALREIADELITPVQLREALLNDLQQVHLDDDDVPDEVGSLSASAEALRLTAETPARNQTSSRRAAAAAAAAAAVDYD</sequence>
<feature type="chain" id="PRO_0000237535" description="DNA-directed RNA polymerase subunit omega">
    <location>
        <begin position="1"/>
        <end position="125"/>
    </location>
</feature>
<evidence type="ECO:0000255" key="1">
    <source>
        <dbReference type="HAMAP-Rule" id="MF_00366"/>
    </source>
</evidence>
<proteinExistence type="inferred from homology"/>